<feature type="chain" id="PRO_1000192305" description="Phosphoenolpyruvate carboxykinase (ATP)">
    <location>
        <begin position="1"/>
        <end position="536"/>
    </location>
</feature>
<feature type="binding site" evidence="1">
    <location>
        <position position="61"/>
    </location>
    <ligand>
        <name>substrate</name>
    </ligand>
</feature>
<feature type="binding site" evidence="1">
    <location>
        <position position="195"/>
    </location>
    <ligand>
        <name>substrate</name>
    </ligand>
</feature>
<feature type="binding site" evidence="1">
    <location>
        <position position="201"/>
    </location>
    <ligand>
        <name>ATP</name>
        <dbReference type="ChEBI" id="CHEBI:30616"/>
    </ligand>
</feature>
<feature type="binding site" evidence="1">
    <location>
        <position position="201"/>
    </location>
    <ligand>
        <name>Mn(2+)</name>
        <dbReference type="ChEBI" id="CHEBI:29035"/>
    </ligand>
</feature>
<feature type="binding site" evidence="1">
    <location>
        <position position="201"/>
    </location>
    <ligand>
        <name>substrate</name>
    </ligand>
</feature>
<feature type="binding site" evidence="1">
    <location>
        <position position="220"/>
    </location>
    <ligand>
        <name>ATP</name>
        <dbReference type="ChEBI" id="CHEBI:30616"/>
    </ligand>
</feature>
<feature type="binding site" evidence="1">
    <location>
        <position position="220"/>
    </location>
    <ligand>
        <name>Mn(2+)</name>
        <dbReference type="ChEBI" id="CHEBI:29035"/>
    </ligand>
</feature>
<feature type="binding site" evidence="1">
    <location>
        <begin position="236"/>
        <end position="244"/>
    </location>
    <ligand>
        <name>ATP</name>
        <dbReference type="ChEBI" id="CHEBI:30616"/>
    </ligand>
</feature>
<feature type="binding site" evidence="1">
    <location>
        <position position="257"/>
    </location>
    <ligand>
        <name>Mn(2+)</name>
        <dbReference type="ChEBI" id="CHEBI:29035"/>
    </ligand>
</feature>
<feature type="binding site" evidence="1">
    <location>
        <position position="285"/>
    </location>
    <ligand>
        <name>ATP</name>
        <dbReference type="ChEBI" id="CHEBI:30616"/>
    </ligand>
</feature>
<feature type="binding site" evidence="1">
    <location>
        <position position="322"/>
    </location>
    <ligand>
        <name>ATP</name>
        <dbReference type="ChEBI" id="CHEBI:30616"/>
    </ligand>
</feature>
<feature type="binding site" evidence="1">
    <location>
        <position position="322"/>
    </location>
    <ligand>
        <name>substrate</name>
    </ligand>
</feature>
<feature type="binding site" evidence="1">
    <location>
        <position position="447"/>
    </location>
    <ligand>
        <name>ATP</name>
        <dbReference type="ChEBI" id="CHEBI:30616"/>
    </ligand>
</feature>
<proteinExistence type="inferred from homology"/>
<comment type="function">
    <text evidence="1">Involved in the gluconeogenesis. Catalyzes the conversion of oxaloacetate (OAA) to phosphoenolpyruvate (PEP) through direct phosphoryl transfer between the nucleoside triphosphate and OAA.</text>
</comment>
<comment type="catalytic activity">
    <reaction evidence="1">
        <text>oxaloacetate + ATP = phosphoenolpyruvate + ADP + CO2</text>
        <dbReference type="Rhea" id="RHEA:18617"/>
        <dbReference type="ChEBI" id="CHEBI:16452"/>
        <dbReference type="ChEBI" id="CHEBI:16526"/>
        <dbReference type="ChEBI" id="CHEBI:30616"/>
        <dbReference type="ChEBI" id="CHEBI:58702"/>
        <dbReference type="ChEBI" id="CHEBI:456216"/>
        <dbReference type="EC" id="4.1.1.49"/>
    </reaction>
</comment>
<comment type="cofactor">
    <cofactor evidence="1">
        <name>Mn(2+)</name>
        <dbReference type="ChEBI" id="CHEBI:29035"/>
    </cofactor>
    <text evidence="1">Binds 1 Mn(2+) ion per subunit.</text>
</comment>
<comment type="pathway">
    <text evidence="1">Carbohydrate biosynthesis; gluconeogenesis.</text>
</comment>
<comment type="subcellular location">
    <subcellularLocation>
        <location evidence="1">Cytoplasm</location>
    </subcellularLocation>
</comment>
<comment type="similarity">
    <text evidence="1">Belongs to the phosphoenolpyruvate carboxykinase (ATP) family.</text>
</comment>
<gene>
    <name evidence="1" type="primary">pckA</name>
    <name type="ordered locus">Arad_0047</name>
</gene>
<reference key="1">
    <citation type="journal article" date="2009" name="J. Bacteriol.">
        <title>Genome sequences of three Agrobacterium biovars help elucidate the evolution of multichromosome genomes in bacteria.</title>
        <authorList>
            <person name="Slater S.C."/>
            <person name="Goldman B.S."/>
            <person name="Goodner B."/>
            <person name="Setubal J.C."/>
            <person name="Farrand S.K."/>
            <person name="Nester E.W."/>
            <person name="Burr T.J."/>
            <person name="Banta L."/>
            <person name="Dickerman A.W."/>
            <person name="Paulsen I."/>
            <person name="Otten L."/>
            <person name="Suen G."/>
            <person name="Welch R."/>
            <person name="Almeida N.F."/>
            <person name="Arnold F."/>
            <person name="Burton O.T."/>
            <person name="Du Z."/>
            <person name="Ewing A."/>
            <person name="Godsy E."/>
            <person name="Heisel S."/>
            <person name="Houmiel K.L."/>
            <person name="Jhaveri J."/>
            <person name="Lu J."/>
            <person name="Miller N.M."/>
            <person name="Norton S."/>
            <person name="Chen Q."/>
            <person name="Phoolcharoen W."/>
            <person name="Ohlin V."/>
            <person name="Ondrusek D."/>
            <person name="Pride N."/>
            <person name="Stricklin S.L."/>
            <person name="Sun J."/>
            <person name="Wheeler C."/>
            <person name="Wilson L."/>
            <person name="Zhu H."/>
            <person name="Wood D.W."/>
        </authorList>
    </citation>
    <scope>NUCLEOTIDE SEQUENCE [LARGE SCALE GENOMIC DNA]</scope>
    <source>
        <strain>K84 / ATCC BAA-868</strain>
    </source>
</reference>
<name>PCKA_RHIR8</name>
<dbReference type="EC" id="4.1.1.49" evidence="1"/>
<dbReference type="EMBL" id="CP000628">
    <property type="protein sequence ID" value="ACM24842.1"/>
    <property type="molecule type" value="Genomic_DNA"/>
</dbReference>
<dbReference type="RefSeq" id="WP_012650659.1">
    <property type="nucleotide sequence ID" value="NC_011985.1"/>
</dbReference>
<dbReference type="SMR" id="B9JG59"/>
<dbReference type="STRING" id="311403.Arad_0047"/>
<dbReference type="GeneID" id="86850445"/>
<dbReference type="KEGG" id="ara:Arad_0047"/>
<dbReference type="eggNOG" id="COG1866">
    <property type="taxonomic scope" value="Bacteria"/>
</dbReference>
<dbReference type="HOGENOM" id="CLU_018247_0_1_5"/>
<dbReference type="UniPathway" id="UPA00138"/>
<dbReference type="Proteomes" id="UP000001600">
    <property type="component" value="Chromosome 1"/>
</dbReference>
<dbReference type="GO" id="GO:0005829">
    <property type="term" value="C:cytosol"/>
    <property type="evidence" value="ECO:0007669"/>
    <property type="project" value="TreeGrafter"/>
</dbReference>
<dbReference type="GO" id="GO:0005524">
    <property type="term" value="F:ATP binding"/>
    <property type="evidence" value="ECO:0007669"/>
    <property type="project" value="UniProtKB-UniRule"/>
</dbReference>
<dbReference type="GO" id="GO:0046872">
    <property type="term" value="F:metal ion binding"/>
    <property type="evidence" value="ECO:0007669"/>
    <property type="project" value="UniProtKB-KW"/>
</dbReference>
<dbReference type="GO" id="GO:0004612">
    <property type="term" value="F:phosphoenolpyruvate carboxykinase (ATP) activity"/>
    <property type="evidence" value="ECO:0007669"/>
    <property type="project" value="UniProtKB-UniRule"/>
</dbReference>
<dbReference type="GO" id="GO:0006094">
    <property type="term" value="P:gluconeogenesis"/>
    <property type="evidence" value="ECO:0007669"/>
    <property type="project" value="UniProtKB-UniRule"/>
</dbReference>
<dbReference type="CDD" id="cd00484">
    <property type="entry name" value="PEPCK_ATP"/>
    <property type="match status" value="1"/>
</dbReference>
<dbReference type="Gene3D" id="3.90.228.20">
    <property type="match status" value="1"/>
</dbReference>
<dbReference type="Gene3D" id="3.40.449.10">
    <property type="entry name" value="Phosphoenolpyruvate Carboxykinase, domain 1"/>
    <property type="match status" value="1"/>
</dbReference>
<dbReference type="Gene3D" id="2.170.8.10">
    <property type="entry name" value="Phosphoenolpyruvate Carboxykinase, domain 2"/>
    <property type="match status" value="1"/>
</dbReference>
<dbReference type="HAMAP" id="MF_00453">
    <property type="entry name" value="PEPCK_ATP"/>
    <property type="match status" value="1"/>
</dbReference>
<dbReference type="InterPro" id="IPR001272">
    <property type="entry name" value="PEP_carboxykinase_ATP"/>
</dbReference>
<dbReference type="InterPro" id="IPR013035">
    <property type="entry name" value="PEP_carboxykinase_C"/>
</dbReference>
<dbReference type="InterPro" id="IPR008210">
    <property type="entry name" value="PEP_carboxykinase_N"/>
</dbReference>
<dbReference type="InterPro" id="IPR015994">
    <property type="entry name" value="PEPCK_ATP_CS"/>
</dbReference>
<dbReference type="NCBIfam" id="TIGR00224">
    <property type="entry name" value="pckA"/>
    <property type="match status" value="1"/>
</dbReference>
<dbReference type="NCBIfam" id="NF006820">
    <property type="entry name" value="PRK09344.1-2"/>
    <property type="match status" value="1"/>
</dbReference>
<dbReference type="NCBIfam" id="NF006821">
    <property type="entry name" value="PRK09344.1-3"/>
    <property type="match status" value="1"/>
</dbReference>
<dbReference type="NCBIfam" id="NF006822">
    <property type="entry name" value="PRK09344.1-4"/>
    <property type="match status" value="1"/>
</dbReference>
<dbReference type="PANTHER" id="PTHR30031:SF0">
    <property type="entry name" value="PHOSPHOENOLPYRUVATE CARBOXYKINASE (ATP)"/>
    <property type="match status" value="1"/>
</dbReference>
<dbReference type="PANTHER" id="PTHR30031">
    <property type="entry name" value="PHOSPHOENOLPYRUVATE CARBOXYKINASE ATP"/>
    <property type="match status" value="1"/>
</dbReference>
<dbReference type="Pfam" id="PF01293">
    <property type="entry name" value="PEPCK_ATP"/>
    <property type="match status" value="1"/>
</dbReference>
<dbReference type="PIRSF" id="PIRSF006294">
    <property type="entry name" value="PEP_crbxkin"/>
    <property type="match status" value="1"/>
</dbReference>
<dbReference type="SUPFAM" id="SSF68923">
    <property type="entry name" value="PEP carboxykinase N-terminal domain"/>
    <property type="match status" value="1"/>
</dbReference>
<dbReference type="SUPFAM" id="SSF53795">
    <property type="entry name" value="PEP carboxykinase-like"/>
    <property type="match status" value="1"/>
</dbReference>
<dbReference type="PROSITE" id="PS00532">
    <property type="entry name" value="PEPCK_ATP"/>
    <property type="match status" value="1"/>
</dbReference>
<keyword id="KW-0067">ATP-binding</keyword>
<keyword id="KW-0963">Cytoplasm</keyword>
<keyword id="KW-0210">Decarboxylase</keyword>
<keyword id="KW-0312">Gluconeogenesis</keyword>
<keyword id="KW-0456">Lyase</keyword>
<keyword id="KW-0464">Manganese</keyword>
<keyword id="KW-0479">Metal-binding</keyword>
<keyword id="KW-0547">Nucleotide-binding</keyword>
<protein>
    <recommendedName>
        <fullName evidence="1">Phosphoenolpyruvate carboxykinase (ATP)</fullName>
        <shortName evidence="1">PCK</shortName>
        <shortName evidence="1">PEP carboxykinase</shortName>
        <shortName evidence="1">PEPCK</shortName>
        <ecNumber evidence="1">4.1.1.49</ecNumber>
    </recommendedName>
</protein>
<evidence type="ECO:0000255" key="1">
    <source>
        <dbReference type="HAMAP-Rule" id="MF_00453"/>
    </source>
</evidence>
<accession>B9JG59</accession>
<sequence>MEQFGVRNPAIELDSIGLGAAASVRYNLLESHLYEEAIRRREADLTAHGALRALTGQHTGRSPKDKFVVRNAVTEDQIWWDNNKPMSPEHFALLHKDMLAHVHGKDLFVQDLIGGADHDYALPTRVVTEFAWHSLFIRNLLIRPERSALESFAPKLTIIDLPSFRADPERHGCRTETVIACDLVNGIVLIGGTSYAGEMKKSVFTVLNYLLPERGVMPMHCSANVGPEGDAAIFFGLSGTGKTTLSADPTRTLIGDDEHGWGENGIFNFEGGCYAKTIRLSAEAEPEIYETTRRFGTVLENVVLDEHGVPDLDDGSLTENTRSAYPLDFIPNASESGMTGHPETIIMLTADAFGVMPPIARLTPEQAMYHFLSGYTAKVAGTEKGVVEPEATFSTCFGAPFMPRHPTEYGNLLKELIARHGAGCWLVNTGWTGGAYGTGRRMPIKATRALLAAALKGDLDKAEFRIDPNFGFAVPVAVEGVDSAILDPRSTWADGQAYDAQAAKLVQMFVSNFAKFEDHVDGNVRDAAPGLRAAAE</sequence>
<organism>
    <name type="scientific">Rhizobium rhizogenes (strain K84 / ATCC BAA-868)</name>
    <name type="common">Agrobacterium radiobacter</name>
    <dbReference type="NCBI Taxonomy" id="311403"/>
    <lineage>
        <taxon>Bacteria</taxon>
        <taxon>Pseudomonadati</taxon>
        <taxon>Pseudomonadota</taxon>
        <taxon>Alphaproteobacteria</taxon>
        <taxon>Hyphomicrobiales</taxon>
        <taxon>Rhizobiaceae</taxon>
        <taxon>Rhizobium/Agrobacterium group</taxon>
        <taxon>Rhizobium</taxon>
    </lineage>
</organism>